<proteinExistence type="inferred from homology"/>
<sequence length="382" mass="42516">MTSLRKTHPLLKIANSALIDLPTPSNISAWWNFGSLLGLCLASQIVTGLFLAMHYTSDISTAFSSVTHICRDVNYGWLVRNMHANGASFFFICLYTHIGRGLYYGSYLYKETWTVGVILLLLTMMTAFVGYVLPWGQMSFWGATVITNLLSAIPYAGQTLVQWIWGGFSVDNATLTRFFAFHFLLPFVIAAFTAIHLLFLHETGSNNPTGLNSDADKIPFHPYFSLKDLLGFTILILTLTSVALLTPNLLGDPDNFTPANPLVTPPHIKPEWYFLFAYAILRSIPNKLGGVLALLASVLILATVPFLQTSKQQALTFRPLTQLVFWTLIANIAILTWIGGMPVEYPFVSIGQLASLAYFSIFLIIIPTTGWLEDKTLKWSRT</sequence>
<dbReference type="EMBL" id="AB016274">
    <property type="protein sequence ID" value="BAB21449.1"/>
    <property type="molecule type" value="Genomic_DNA"/>
</dbReference>
<dbReference type="RefSeq" id="NP_067147.1">
    <property type="nucleotide sequence ID" value="NC_002574.1"/>
</dbReference>
<dbReference type="SMR" id="Q9BA02"/>
<dbReference type="GeneID" id="800066"/>
<dbReference type="CTD" id="4519"/>
<dbReference type="GO" id="GO:0005743">
    <property type="term" value="C:mitochondrial inner membrane"/>
    <property type="evidence" value="ECO:0007669"/>
    <property type="project" value="UniProtKB-SubCell"/>
</dbReference>
<dbReference type="GO" id="GO:0045275">
    <property type="term" value="C:respiratory chain complex III"/>
    <property type="evidence" value="ECO:0007669"/>
    <property type="project" value="InterPro"/>
</dbReference>
<dbReference type="GO" id="GO:0046872">
    <property type="term" value="F:metal ion binding"/>
    <property type="evidence" value="ECO:0007669"/>
    <property type="project" value="UniProtKB-KW"/>
</dbReference>
<dbReference type="GO" id="GO:0008121">
    <property type="term" value="F:ubiquinol-cytochrome-c reductase activity"/>
    <property type="evidence" value="ECO:0007669"/>
    <property type="project" value="InterPro"/>
</dbReference>
<dbReference type="GO" id="GO:0006122">
    <property type="term" value="P:mitochondrial electron transport, ubiquinol to cytochrome c"/>
    <property type="evidence" value="ECO:0007669"/>
    <property type="project" value="TreeGrafter"/>
</dbReference>
<dbReference type="CDD" id="cd00290">
    <property type="entry name" value="cytochrome_b_C"/>
    <property type="match status" value="1"/>
</dbReference>
<dbReference type="CDD" id="cd00284">
    <property type="entry name" value="Cytochrome_b_N"/>
    <property type="match status" value="1"/>
</dbReference>
<dbReference type="FunFam" id="1.20.810.10:FF:000002">
    <property type="entry name" value="Cytochrome b"/>
    <property type="match status" value="1"/>
</dbReference>
<dbReference type="Gene3D" id="1.20.810.10">
    <property type="entry name" value="Cytochrome Bc1 Complex, Chain C"/>
    <property type="match status" value="1"/>
</dbReference>
<dbReference type="InterPro" id="IPR005798">
    <property type="entry name" value="Cyt_b/b6_C"/>
</dbReference>
<dbReference type="InterPro" id="IPR036150">
    <property type="entry name" value="Cyt_b/b6_C_sf"/>
</dbReference>
<dbReference type="InterPro" id="IPR005797">
    <property type="entry name" value="Cyt_b/b6_N"/>
</dbReference>
<dbReference type="InterPro" id="IPR027387">
    <property type="entry name" value="Cytb/b6-like_sf"/>
</dbReference>
<dbReference type="InterPro" id="IPR030689">
    <property type="entry name" value="Cytochrome_b"/>
</dbReference>
<dbReference type="InterPro" id="IPR048260">
    <property type="entry name" value="Cytochrome_b_C_euk/bac"/>
</dbReference>
<dbReference type="InterPro" id="IPR048259">
    <property type="entry name" value="Cytochrome_b_N_euk/bac"/>
</dbReference>
<dbReference type="InterPro" id="IPR016174">
    <property type="entry name" value="Di-haem_cyt_TM"/>
</dbReference>
<dbReference type="PANTHER" id="PTHR19271">
    <property type="entry name" value="CYTOCHROME B"/>
    <property type="match status" value="1"/>
</dbReference>
<dbReference type="PANTHER" id="PTHR19271:SF16">
    <property type="entry name" value="CYTOCHROME B"/>
    <property type="match status" value="1"/>
</dbReference>
<dbReference type="Pfam" id="PF00032">
    <property type="entry name" value="Cytochrom_B_C"/>
    <property type="match status" value="1"/>
</dbReference>
<dbReference type="Pfam" id="PF00033">
    <property type="entry name" value="Cytochrome_B"/>
    <property type="match status" value="1"/>
</dbReference>
<dbReference type="PIRSF" id="PIRSF038885">
    <property type="entry name" value="COB"/>
    <property type="match status" value="1"/>
</dbReference>
<dbReference type="SUPFAM" id="SSF81648">
    <property type="entry name" value="a domain/subunit of cytochrome bc1 complex (Ubiquinol-cytochrome c reductase)"/>
    <property type="match status" value="1"/>
</dbReference>
<dbReference type="SUPFAM" id="SSF81342">
    <property type="entry name" value="Transmembrane di-heme cytochromes"/>
    <property type="match status" value="1"/>
</dbReference>
<dbReference type="PROSITE" id="PS51003">
    <property type="entry name" value="CYTB_CTER"/>
    <property type="match status" value="1"/>
</dbReference>
<dbReference type="PROSITE" id="PS51002">
    <property type="entry name" value="CYTB_NTER"/>
    <property type="match status" value="1"/>
</dbReference>
<reference key="1">
    <citation type="journal article" date="1999" name="Mar. Biotechnol.">
        <title>Organization of the mitochondrial genome of a deep-sea fish, Gonostoma gracile (Teleostei: Stomiiformes): first example of transfer RNA gene rearrangements in bony fishes.</title>
        <authorList>
            <person name="Miya M."/>
            <person name="Nishida M."/>
        </authorList>
    </citation>
    <scope>NUCLEOTIDE SEQUENCE [GENOMIC DNA]</scope>
</reference>
<feature type="chain" id="PRO_0000061010" description="Cytochrome b">
    <location>
        <begin position="1"/>
        <end position="382"/>
    </location>
</feature>
<feature type="transmembrane region" description="Helical" evidence="2">
    <location>
        <begin position="33"/>
        <end position="53"/>
    </location>
</feature>
<feature type="transmembrane region" description="Helical" evidence="2">
    <location>
        <begin position="77"/>
        <end position="98"/>
    </location>
</feature>
<feature type="transmembrane region" description="Helical" evidence="2">
    <location>
        <begin position="113"/>
        <end position="133"/>
    </location>
</feature>
<feature type="transmembrane region" description="Helical" evidence="2">
    <location>
        <begin position="178"/>
        <end position="198"/>
    </location>
</feature>
<feature type="transmembrane region" description="Helical" evidence="2">
    <location>
        <begin position="226"/>
        <end position="246"/>
    </location>
</feature>
<feature type="transmembrane region" description="Helical" evidence="2">
    <location>
        <begin position="288"/>
        <end position="308"/>
    </location>
</feature>
<feature type="transmembrane region" description="Helical" evidence="2">
    <location>
        <begin position="320"/>
        <end position="340"/>
    </location>
</feature>
<feature type="transmembrane region" description="Helical" evidence="2">
    <location>
        <begin position="347"/>
        <end position="367"/>
    </location>
</feature>
<feature type="binding site" description="axial binding residue" evidence="2">
    <location>
        <position position="83"/>
    </location>
    <ligand>
        <name>heme b</name>
        <dbReference type="ChEBI" id="CHEBI:60344"/>
        <label>b562</label>
    </ligand>
    <ligandPart>
        <name>Fe</name>
        <dbReference type="ChEBI" id="CHEBI:18248"/>
    </ligandPart>
</feature>
<feature type="binding site" description="axial binding residue" evidence="2">
    <location>
        <position position="97"/>
    </location>
    <ligand>
        <name>heme b</name>
        <dbReference type="ChEBI" id="CHEBI:60344"/>
        <label>b566</label>
    </ligand>
    <ligandPart>
        <name>Fe</name>
        <dbReference type="ChEBI" id="CHEBI:18248"/>
    </ligandPart>
</feature>
<feature type="binding site" description="axial binding residue" evidence="2">
    <location>
        <position position="182"/>
    </location>
    <ligand>
        <name>heme b</name>
        <dbReference type="ChEBI" id="CHEBI:60344"/>
        <label>b562</label>
    </ligand>
    <ligandPart>
        <name>Fe</name>
        <dbReference type="ChEBI" id="CHEBI:18248"/>
    </ligandPart>
</feature>
<feature type="binding site" description="axial binding residue" evidence="2">
    <location>
        <position position="196"/>
    </location>
    <ligand>
        <name>heme b</name>
        <dbReference type="ChEBI" id="CHEBI:60344"/>
        <label>b566</label>
    </ligand>
    <ligandPart>
        <name>Fe</name>
        <dbReference type="ChEBI" id="CHEBI:18248"/>
    </ligandPart>
</feature>
<feature type="binding site" evidence="2">
    <location>
        <position position="201"/>
    </location>
    <ligand>
        <name>a ubiquinone</name>
        <dbReference type="ChEBI" id="CHEBI:16389"/>
    </ligand>
</feature>
<organism>
    <name type="scientific">Sigmops gracilis</name>
    <name type="common">Slender fangjaw</name>
    <name type="synonym">Gonostoma gracile</name>
    <dbReference type="NCBI Taxonomy" id="48457"/>
    <lineage>
        <taxon>Eukaryota</taxon>
        <taxon>Metazoa</taxon>
        <taxon>Chordata</taxon>
        <taxon>Craniata</taxon>
        <taxon>Vertebrata</taxon>
        <taxon>Euteleostomi</taxon>
        <taxon>Actinopterygii</taxon>
        <taxon>Neopterygii</taxon>
        <taxon>Teleostei</taxon>
        <taxon>Stomiati</taxon>
        <taxon>Stomiiformes</taxon>
        <taxon>Gonostomatidae</taxon>
        <taxon>Sigmops</taxon>
    </lineage>
</organism>
<protein>
    <recommendedName>
        <fullName>Cytochrome b</fullName>
    </recommendedName>
    <alternativeName>
        <fullName>Complex III subunit 3</fullName>
    </alternativeName>
    <alternativeName>
        <fullName>Complex III subunit III</fullName>
    </alternativeName>
    <alternativeName>
        <fullName>Cytochrome b-c1 complex subunit 3</fullName>
    </alternativeName>
    <alternativeName>
        <fullName>Ubiquinol-cytochrome-c reductase complex cytochrome b subunit</fullName>
    </alternativeName>
</protein>
<geneLocation type="mitochondrion"/>
<accession>Q9BA02</accession>
<name>CYB_SIGGR</name>
<keyword id="KW-0249">Electron transport</keyword>
<keyword id="KW-0349">Heme</keyword>
<keyword id="KW-0408">Iron</keyword>
<keyword id="KW-0472">Membrane</keyword>
<keyword id="KW-0479">Metal-binding</keyword>
<keyword id="KW-0496">Mitochondrion</keyword>
<keyword id="KW-0999">Mitochondrion inner membrane</keyword>
<keyword id="KW-0679">Respiratory chain</keyword>
<keyword id="KW-0812">Transmembrane</keyword>
<keyword id="KW-1133">Transmembrane helix</keyword>
<keyword id="KW-0813">Transport</keyword>
<keyword id="KW-0830">Ubiquinone</keyword>
<gene>
    <name type="primary">mt-cyb</name>
    <name type="synonym">cob</name>
    <name type="synonym">cytb</name>
    <name type="synonym">mtcyb</name>
</gene>
<comment type="function">
    <text evidence="2">Component of the ubiquinol-cytochrome c reductase complex (complex III or cytochrome b-c1 complex) that is part of the mitochondrial respiratory chain. The b-c1 complex mediates electron transfer from ubiquinol to cytochrome c. Contributes to the generation of a proton gradient across the mitochondrial membrane that is then used for ATP synthesis.</text>
</comment>
<comment type="cofactor">
    <cofactor evidence="2">
        <name>heme b</name>
        <dbReference type="ChEBI" id="CHEBI:60344"/>
    </cofactor>
    <text evidence="2">Binds 2 heme b groups non-covalently.</text>
</comment>
<comment type="subunit">
    <text evidence="2">The cytochrome bc1 complex contains 3 respiratory subunits (MT-CYB, CYC1 and UQCRFS1), 2 core proteins (UQCRC1 and UQCRC2) and probably 6 low-molecular weight proteins.</text>
</comment>
<comment type="subcellular location">
    <subcellularLocation>
        <location evidence="2">Mitochondrion inner membrane</location>
        <topology evidence="2">Multi-pass membrane protein</topology>
    </subcellularLocation>
</comment>
<comment type="miscellaneous">
    <text evidence="1">Heme 1 (or BL or b562) is low-potential and absorbs at about 562 nm, and heme 2 (or BH or b566) is high-potential and absorbs at about 566 nm.</text>
</comment>
<comment type="similarity">
    <text evidence="3 4">Belongs to the cytochrome b family.</text>
</comment>
<comment type="caution">
    <text evidence="2">The full-length protein contains only eight transmembrane helices, not nine as predicted by bioinformatics tools.</text>
</comment>
<evidence type="ECO:0000250" key="1"/>
<evidence type="ECO:0000250" key="2">
    <source>
        <dbReference type="UniProtKB" id="P00157"/>
    </source>
</evidence>
<evidence type="ECO:0000255" key="3">
    <source>
        <dbReference type="PROSITE-ProRule" id="PRU00967"/>
    </source>
</evidence>
<evidence type="ECO:0000255" key="4">
    <source>
        <dbReference type="PROSITE-ProRule" id="PRU00968"/>
    </source>
</evidence>